<proteinExistence type="inferred from homology"/>
<comment type="function">
    <text evidence="1">One of the essential components for the initiation of protein synthesis. Stabilizes the binding of IF-2 and IF-3 on the 30S subunit to which N-formylmethionyl-tRNA(fMet) subsequently binds. Helps modulate mRNA selection, yielding the 30S pre-initiation complex (PIC). Upon addition of the 50S ribosomal subunit IF-1, IF-2 and IF-3 are released leaving the mature 70S translation initiation complex.</text>
</comment>
<comment type="subunit">
    <text evidence="1">Component of the 30S ribosomal translation pre-initiation complex which assembles on the 30S ribosome in the order IF-2 and IF-3, IF-1 and N-formylmethionyl-tRNA(fMet); mRNA recruitment can occur at any time during PIC assembly.</text>
</comment>
<comment type="subcellular location">
    <subcellularLocation>
        <location evidence="1">Cytoplasm</location>
    </subcellularLocation>
</comment>
<comment type="similarity">
    <text evidence="1">Belongs to the IF-1 family.</text>
</comment>
<name>IF1_CUTAK</name>
<accession>Q6A6Q6</accession>
<protein>
    <recommendedName>
        <fullName evidence="1">Translation initiation factor IF-1</fullName>
    </recommendedName>
</protein>
<feature type="chain" id="PRO_0000095843" description="Translation initiation factor IF-1">
    <location>
        <begin position="1"/>
        <end position="73"/>
    </location>
</feature>
<feature type="domain" description="S1-like" evidence="1">
    <location>
        <begin position="1"/>
        <end position="73"/>
    </location>
</feature>
<dbReference type="EMBL" id="AE017283">
    <property type="protein sequence ID" value="AAT83557.1"/>
    <property type="molecule type" value="Genomic_DNA"/>
</dbReference>
<dbReference type="RefSeq" id="WP_002514837.1">
    <property type="nucleotide sequence ID" value="NZ_CP025935.1"/>
</dbReference>
<dbReference type="SMR" id="Q6A6Q6"/>
<dbReference type="EnsemblBacteria" id="AAT83557">
    <property type="protein sequence ID" value="AAT83557"/>
    <property type="gene ID" value="PPA1832"/>
</dbReference>
<dbReference type="GeneID" id="92881184"/>
<dbReference type="KEGG" id="pac:PPA1832"/>
<dbReference type="eggNOG" id="COG0361">
    <property type="taxonomic scope" value="Bacteria"/>
</dbReference>
<dbReference type="HOGENOM" id="CLU_151267_1_0_11"/>
<dbReference type="Proteomes" id="UP000000603">
    <property type="component" value="Chromosome"/>
</dbReference>
<dbReference type="GO" id="GO:0005829">
    <property type="term" value="C:cytosol"/>
    <property type="evidence" value="ECO:0007669"/>
    <property type="project" value="TreeGrafter"/>
</dbReference>
<dbReference type="GO" id="GO:0043022">
    <property type="term" value="F:ribosome binding"/>
    <property type="evidence" value="ECO:0007669"/>
    <property type="project" value="UniProtKB-UniRule"/>
</dbReference>
<dbReference type="GO" id="GO:0019843">
    <property type="term" value="F:rRNA binding"/>
    <property type="evidence" value="ECO:0007669"/>
    <property type="project" value="UniProtKB-UniRule"/>
</dbReference>
<dbReference type="GO" id="GO:0003743">
    <property type="term" value="F:translation initiation factor activity"/>
    <property type="evidence" value="ECO:0007669"/>
    <property type="project" value="UniProtKB-UniRule"/>
</dbReference>
<dbReference type="CDD" id="cd04451">
    <property type="entry name" value="S1_IF1"/>
    <property type="match status" value="1"/>
</dbReference>
<dbReference type="FunFam" id="2.40.50.140:FF:000002">
    <property type="entry name" value="Translation initiation factor IF-1"/>
    <property type="match status" value="1"/>
</dbReference>
<dbReference type="Gene3D" id="2.40.50.140">
    <property type="entry name" value="Nucleic acid-binding proteins"/>
    <property type="match status" value="1"/>
</dbReference>
<dbReference type="HAMAP" id="MF_00075">
    <property type="entry name" value="IF_1"/>
    <property type="match status" value="1"/>
</dbReference>
<dbReference type="InterPro" id="IPR012340">
    <property type="entry name" value="NA-bd_OB-fold"/>
</dbReference>
<dbReference type="InterPro" id="IPR006196">
    <property type="entry name" value="RNA-binding_domain_S1_IF1"/>
</dbReference>
<dbReference type="InterPro" id="IPR003029">
    <property type="entry name" value="S1_domain"/>
</dbReference>
<dbReference type="InterPro" id="IPR004368">
    <property type="entry name" value="TIF_IF1"/>
</dbReference>
<dbReference type="NCBIfam" id="TIGR00008">
    <property type="entry name" value="infA"/>
    <property type="match status" value="1"/>
</dbReference>
<dbReference type="PANTHER" id="PTHR33370">
    <property type="entry name" value="TRANSLATION INITIATION FACTOR IF-1, CHLOROPLASTIC"/>
    <property type="match status" value="1"/>
</dbReference>
<dbReference type="PANTHER" id="PTHR33370:SF1">
    <property type="entry name" value="TRANSLATION INITIATION FACTOR IF-1, CHLOROPLASTIC"/>
    <property type="match status" value="1"/>
</dbReference>
<dbReference type="Pfam" id="PF01176">
    <property type="entry name" value="eIF-1a"/>
    <property type="match status" value="1"/>
</dbReference>
<dbReference type="SMART" id="SM00316">
    <property type="entry name" value="S1"/>
    <property type="match status" value="1"/>
</dbReference>
<dbReference type="SUPFAM" id="SSF50249">
    <property type="entry name" value="Nucleic acid-binding proteins"/>
    <property type="match status" value="1"/>
</dbReference>
<dbReference type="PROSITE" id="PS50832">
    <property type="entry name" value="S1_IF1_TYPE"/>
    <property type="match status" value="1"/>
</dbReference>
<gene>
    <name evidence="1" type="primary">infA</name>
    <name type="ordered locus">PPA1832</name>
</gene>
<organism>
    <name type="scientific">Cutibacterium acnes (strain DSM 16379 / KPA171202)</name>
    <name type="common">Propionibacterium acnes</name>
    <dbReference type="NCBI Taxonomy" id="267747"/>
    <lineage>
        <taxon>Bacteria</taxon>
        <taxon>Bacillati</taxon>
        <taxon>Actinomycetota</taxon>
        <taxon>Actinomycetes</taxon>
        <taxon>Propionibacteriales</taxon>
        <taxon>Propionibacteriaceae</taxon>
        <taxon>Cutibacterium</taxon>
    </lineage>
</organism>
<sequence length="73" mass="8359">MAKKEGALELEGTVVEALPNAMFRVELKNGHRVLATISGKMRQHYIRILPSDRVVVELSPYDLTRGRIVYRHK</sequence>
<keyword id="KW-0963">Cytoplasm</keyword>
<keyword id="KW-0396">Initiation factor</keyword>
<keyword id="KW-0648">Protein biosynthesis</keyword>
<keyword id="KW-0694">RNA-binding</keyword>
<keyword id="KW-0699">rRNA-binding</keyword>
<evidence type="ECO:0000255" key="1">
    <source>
        <dbReference type="HAMAP-Rule" id="MF_00075"/>
    </source>
</evidence>
<reference key="1">
    <citation type="journal article" date="2004" name="Science">
        <title>The complete genome sequence of Propionibacterium acnes, a commensal of human skin.</title>
        <authorList>
            <person name="Brueggemann H."/>
            <person name="Henne A."/>
            <person name="Hoster F."/>
            <person name="Liesegang H."/>
            <person name="Wiezer A."/>
            <person name="Strittmatter A."/>
            <person name="Hujer S."/>
            <person name="Duerre P."/>
            <person name="Gottschalk G."/>
        </authorList>
    </citation>
    <scope>NUCLEOTIDE SEQUENCE [LARGE SCALE GENOMIC DNA]</scope>
    <source>
        <strain>DSM 16379 / KPA171202</strain>
    </source>
</reference>